<keyword id="KW-0217">Developmental protein</keyword>
<keyword id="KW-0221">Differentiation</keyword>
<keyword id="KW-0256">Endoplasmic reticulum</keyword>
<keyword id="KW-0328">Glycosyltransferase</keyword>
<keyword id="KW-0472">Membrane</keyword>
<keyword id="KW-0524">Neurogenesis</keyword>
<keyword id="KW-1185">Reference proteome</keyword>
<keyword id="KW-0808">Transferase</keyword>
<keyword id="KW-0812">Transmembrane</keyword>
<keyword id="KW-1133">Transmembrane helix</keyword>
<organism>
    <name type="scientific">Caenorhabditis briggsae</name>
    <dbReference type="NCBI Taxonomy" id="6238"/>
    <lineage>
        <taxon>Eukaryota</taxon>
        <taxon>Metazoa</taxon>
        <taxon>Ecdysozoa</taxon>
        <taxon>Nematoda</taxon>
        <taxon>Chromadorea</taxon>
        <taxon>Rhabditida</taxon>
        <taxon>Rhabditina</taxon>
        <taxon>Rhabditomorpha</taxon>
        <taxon>Rhabditoidea</taxon>
        <taxon>Rhabditidae</taxon>
        <taxon>Peloderinae</taxon>
        <taxon>Caenorhabditis</taxon>
    </lineage>
</organism>
<feature type="chain" id="PRO_0000365630" description="C-mannosyltransferase dpy-19">
    <location>
        <begin position="1"/>
        <end position="687"/>
    </location>
</feature>
<feature type="transmembrane region" description="Helical" evidence="3">
    <location>
        <begin position="24"/>
        <end position="44"/>
    </location>
</feature>
<feature type="transmembrane region" description="Helical" evidence="3">
    <location>
        <begin position="170"/>
        <end position="190"/>
    </location>
</feature>
<feature type="transmembrane region" description="Helical" evidence="3">
    <location>
        <begin position="191"/>
        <end position="211"/>
    </location>
</feature>
<feature type="transmembrane region" description="Helical" evidence="3">
    <location>
        <begin position="223"/>
        <end position="243"/>
    </location>
</feature>
<feature type="transmembrane region" description="Helical" evidence="3">
    <location>
        <begin position="253"/>
        <end position="273"/>
    </location>
</feature>
<feature type="transmembrane region" description="Helical" evidence="3">
    <location>
        <begin position="276"/>
        <end position="296"/>
    </location>
</feature>
<feature type="transmembrane region" description="Helical" evidence="3">
    <location>
        <begin position="303"/>
        <end position="323"/>
    </location>
</feature>
<feature type="transmembrane region" description="Helical" evidence="3">
    <location>
        <begin position="324"/>
        <end position="344"/>
    </location>
</feature>
<feature type="transmembrane region" description="Helical" evidence="3">
    <location>
        <begin position="347"/>
        <end position="367"/>
    </location>
</feature>
<feature type="transmembrane region" description="Helical" evidence="3">
    <location>
        <begin position="415"/>
        <end position="435"/>
    </location>
</feature>
<feature type="transmembrane region" description="Helical" evidence="3">
    <location>
        <begin position="454"/>
        <end position="474"/>
    </location>
</feature>
<evidence type="ECO:0000250" key="1"/>
<evidence type="ECO:0000250" key="2">
    <source>
        <dbReference type="UniProtKB" id="P34413"/>
    </source>
</evidence>
<evidence type="ECO:0000255" key="3"/>
<evidence type="ECO:0000312" key="4">
    <source>
        <dbReference type="EMBL" id="CAP39491.1"/>
    </source>
</evidence>
<gene>
    <name evidence="4" type="primary">dpy-19</name>
    <name type="ORF">CBG22936</name>
</gene>
<comment type="function">
    <text evidence="1">C-mannosyltransferase that mediates C-mannosylation of tryptophan residues on target proteins such as unc-5 and mig-21. Mediates the attachment of alpha-mannose in C-C linkage to the C2 of the indole ring of tryptophan. C-mannosylation takes place in the endoplasmic reticulum and frequently found in thrombospondin (TSP) type-1 repeats and in the WSXWS motif of type I cytokine receptors. Required to orient neuroblasts QL and QR correctly on the anterior/posterior (A/P) axis: QL and QR are born in the same A/P position, but polarize and migrate left/right asymmetrically, QL migrates toward the posterior and QR migrates toward the anterior. Required with unc-40 to express mab-5 correctly in the Q cell descendants (By similarity).</text>
</comment>
<comment type="subcellular location">
    <subcellularLocation>
        <location evidence="1">Endoplasmic reticulum membrane</location>
        <topology evidence="1">Multi-pass membrane protein</topology>
    </subcellularLocation>
</comment>
<comment type="similarity">
    <text evidence="3">Belongs to the dpy-19 family.</text>
</comment>
<accession>A8Y3M2</accession>
<proteinExistence type="inferred from homology"/>
<sequence length="687" mass="77918">MAKKAKNSEKNGPRHSGNFSQESGISGNLWLATVVLIGLFVGFLNYQHIYTLFENDKHFSHLADFEREMAYRTEMGLYYSYYKTIITAPSFLEGVQLITRDTVTEHGHQINTLNRFNLYPEVILAFLYRPFRALAKSANWQVETCWQVNRGDLRPVESCEGIGNPHYFYITGVFVVAGTVATSLFYLGVLVSDSIFGGILSVLCFAFNHGEATRVQWTPPLRESFAFPFIIGHIAILTYIIKYRKSSTAHLLLLISAAVPALLFWQFTQFAFFTQICSIFAAFSMDLVPLDTAKTIIKSHLSAFFISFVMLFGNEMMIAALYFPSIWALATVIYISPMLAGIRLRPLYLLILALIFGSITLGLKVGFSKGLGIEDDAHIFDILRSKFTSFANFHTRLYTCSAEFDFIQYATIEKLSSTLLIPLALLSIGAFSWDFLSKTSLLWRTLENEDSEYGEVIYNLVQLICSTTMAVLIMRLKLFMTPHLCITVALLANSKLLGGDKIAKTVRSSVLVGLVAMLAFRGIPNIRHQLNIKGEYSNPDQEMLFDWIQSNTKQDAVFAGTMPVMANVKLTTLRPIVNHPHYEHVGIRDRTLKVYSMFSKKPVAEVHQTMKKMGVNYFIFQLMNCSNDERRPECVYRGMWDEEDPKNSARTSLCDLWILAANSKDNSRISPFKIVYNPNRNYIVLKI</sequence>
<reference evidence="4" key="1">
    <citation type="journal article" date="2003" name="PLoS Biol.">
        <title>The genome sequence of Caenorhabditis briggsae: a platform for comparative genomics.</title>
        <authorList>
            <person name="Stein L.D."/>
            <person name="Bao Z."/>
            <person name="Blasiar D."/>
            <person name="Blumenthal T."/>
            <person name="Brent M.R."/>
            <person name="Chen N."/>
            <person name="Chinwalla A."/>
            <person name="Clarke L."/>
            <person name="Clee C."/>
            <person name="Coghlan A."/>
            <person name="Coulson A."/>
            <person name="D'Eustachio P."/>
            <person name="Fitch D.H.A."/>
            <person name="Fulton L.A."/>
            <person name="Fulton R.E."/>
            <person name="Griffiths-Jones S."/>
            <person name="Harris T.W."/>
            <person name="Hillier L.W."/>
            <person name="Kamath R."/>
            <person name="Kuwabara P.E."/>
            <person name="Mardis E.R."/>
            <person name="Marra M.A."/>
            <person name="Miner T.L."/>
            <person name="Minx P."/>
            <person name="Mullikin J.C."/>
            <person name="Plumb R.W."/>
            <person name="Rogers J."/>
            <person name="Schein J.E."/>
            <person name="Sohrmann M."/>
            <person name="Spieth J."/>
            <person name="Stajich J.E."/>
            <person name="Wei C."/>
            <person name="Willey D."/>
            <person name="Wilson R.K."/>
            <person name="Durbin R.M."/>
            <person name="Waterston R.H."/>
        </authorList>
    </citation>
    <scope>NUCLEOTIDE SEQUENCE [LARGE SCALE GENOMIC DNA]</scope>
    <source>
        <strain evidence="4">AF16</strain>
    </source>
</reference>
<name>DPY19_CAEBR</name>
<dbReference type="EC" id="2.4.1.-"/>
<dbReference type="EMBL" id="HE600964">
    <property type="protein sequence ID" value="CAP39491.1"/>
    <property type="molecule type" value="Genomic_DNA"/>
</dbReference>
<dbReference type="SMR" id="A8Y3M2"/>
<dbReference type="FunCoup" id="A8Y3M2">
    <property type="interactions" value="1906"/>
</dbReference>
<dbReference type="STRING" id="6238.A8Y3M2"/>
<dbReference type="EnsemblMetazoa" id="CBG22936a.1">
    <property type="protein sequence ID" value="CBG22936a.1"/>
    <property type="gene ID" value="WBGene00041383"/>
</dbReference>
<dbReference type="KEGG" id="cbr:CBG_22936"/>
<dbReference type="CTD" id="8585022"/>
<dbReference type="WormBase" id="CBG22936a">
    <property type="protein sequence ID" value="CBP05446"/>
    <property type="gene ID" value="WBGene00041383"/>
    <property type="gene designation" value="Cbr-dpy-19"/>
</dbReference>
<dbReference type="eggNOG" id="KOG4587">
    <property type="taxonomic scope" value="Eukaryota"/>
</dbReference>
<dbReference type="HOGENOM" id="CLU_014404_0_1_1"/>
<dbReference type="InParanoid" id="A8Y3M2"/>
<dbReference type="OMA" id="YDNITEY"/>
<dbReference type="Proteomes" id="UP000008549">
    <property type="component" value="Unassembled WGS sequence"/>
</dbReference>
<dbReference type="GO" id="GO:0005789">
    <property type="term" value="C:endoplasmic reticulum membrane"/>
    <property type="evidence" value="ECO:0000318"/>
    <property type="project" value="GO_Central"/>
</dbReference>
<dbReference type="GO" id="GO:0000030">
    <property type="term" value="F:mannosyltransferase activity"/>
    <property type="evidence" value="ECO:0000318"/>
    <property type="project" value="GO_Central"/>
</dbReference>
<dbReference type="GO" id="GO:0030154">
    <property type="term" value="P:cell differentiation"/>
    <property type="evidence" value="ECO:0007669"/>
    <property type="project" value="UniProtKB-KW"/>
</dbReference>
<dbReference type="GO" id="GO:0007399">
    <property type="term" value="P:nervous system development"/>
    <property type="evidence" value="ECO:0007669"/>
    <property type="project" value="UniProtKB-KW"/>
</dbReference>
<dbReference type="CDD" id="cd20177">
    <property type="entry name" value="Dpy19"/>
    <property type="match status" value="1"/>
</dbReference>
<dbReference type="InterPro" id="IPR018732">
    <property type="entry name" value="Dpy-19/Dpy-19-like"/>
</dbReference>
<dbReference type="InterPro" id="IPR047462">
    <property type="entry name" value="Dpy19"/>
</dbReference>
<dbReference type="PANTHER" id="PTHR31488:SF1">
    <property type="entry name" value="C-MANNOSYLTRANSFERASE DPY19L1"/>
    <property type="match status" value="1"/>
</dbReference>
<dbReference type="PANTHER" id="PTHR31488">
    <property type="entry name" value="DPY-19-LIKE 1, LIKE (H. SAPIENS)"/>
    <property type="match status" value="1"/>
</dbReference>
<dbReference type="Pfam" id="PF10034">
    <property type="entry name" value="Dpy19"/>
    <property type="match status" value="1"/>
</dbReference>
<protein>
    <recommendedName>
        <fullName>C-mannosyltransferase dpy-19</fullName>
        <ecNumber>2.4.1.-</ecNumber>
    </recommendedName>
    <alternativeName>
        <fullName evidence="2">Protein dumpy-19</fullName>
    </alternativeName>
</protein>